<name>CK096_FELCA</name>
<organism>
    <name type="scientific">Felis catus</name>
    <name type="common">Cat</name>
    <name type="synonym">Felis silvestris catus</name>
    <dbReference type="NCBI Taxonomy" id="9685"/>
    <lineage>
        <taxon>Eukaryota</taxon>
        <taxon>Metazoa</taxon>
        <taxon>Chordata</taxon>
        <taxon>Craniata</taxon>
        <taxon>Vertebrata</taxon>
        <taxon>Euteleostomi</taxon>
        <taxon>Mammalia</taxon>
        <taxon>Eutheria</taxon>
        <taxon>Laurasiatheria</taxon>
        <taxon>Carnivora</taxon>
        <taxon>Feliformia</taxon>
        <taxon>Felidae</taxon>
        <taxon>Felinae</taxon>
        <taxon>Felis</taxon>
    </lineage>
</organism>
<protein>
    <recommendedName>
        <fullName evidence="5">Uncharacterized protein C11orf96 homolog</fullName>
    </recommendedName>
</protein>
<evidence type="ECO:0000250" key="1">
    <source>
        <dbReference type="UniProtKB" id="A8IHN8"/>
    </source>
</evidence>
<evidence type="ECO:0000250" key="2">
    <source>
        <dbReference type="UniProtKB" id="Q3UPL5"/>
    </source>
</evidence>
<evidence type="ECO:0000250" key="3">
    <source>
        <dbReference type="UniProtKB" id="Q7Z7L8"/>
    </source>
</evidence>
<evidence type="ECO:0000269" key="4">
    <source>
    </source>
</evidence>
<evidence type="ECO:0000305" key="5"/>
<sequence length="123" mass="13806">MAAAKPGELMGICSSYQAVMPHFVCLADEFPQPVRPAKLSKGKGRLRRPRQSRFKTQPVTFDEIQEVEEEGVSPMEEEKAKKSFLQSLECLRRSTQSLSLQREQLSSCKLRNSLDSSDSDSAL</sequence>
<dbReference type="EMBL" id="OM643227">
    <property type="protein sequence ID" value="UQS36263.1"/>
    <property type="molecule type" value="mRNA"/>
</dbReference>
<feature type="chain" id="PRO_0000462532" description="Uncharacterized protein C11orf96 homolog">
    <location>
        <begin position="1"/>
        <end position="123"/>
    </location>
</feature>
<feature type="modified residue" description="Phosphothreonine" evidence="3">
    <location>
        <position position="56"/>
    </location>
</feature>
<feature type="modified residue" description="Phosphoserine" evidence="2">
    <location>
        <position position="73"/>
    </location>
</feature>
<feature type="modified residue" description="Phosphoserine" evidence="3">
    <location>
        <position position="87"/>
    </location>
</feature>
<feature type="modified residue" description="Phosphoserine" evidence="2">
    <location>
        <position position="97"/>
    </location>
</feature>
<feature type="modified residue" description="Phosphoserine" evidence="3">
    <location>
        <position position="113"/>
    </location>
</feature>
<feature type="modified residue" description="Phosphoserine" evidence="1">
    <location>
        <position position="119"/>
    </location>
</feature>
<keyword id="KW-0963">Cytoplasm</keyword>
<keyword id="KW-0597">Phosphoprotein</keyword>
<keyword id="KW-1185">Reference proteome</keyword>
<accession>C0HME0</accession>
<proteinExistence type="evidence at protein level"/>
<comment type="subcellular location">
    <subcellularLocation>
        <location evidence="4">Cytoplasm</location>
    </subcellularLocation>
</comment>
<comment type="tissue specificity">
    <text evidence="4">Highly expressed in the kidney (at protein level).</text>
</comment>
<reference evidence="5" key="1">
    <citation type="journal article" date="2022" name="BMC Vet. Res.">
        <title>Molecular cloning, characterization, and functional analysis of the uncharacterized C11orf96 gene.</title>
        <authorList>
            <person name="Yang H."/>
            <person name="Zhu J."/>
            <person name="Guo H."/>
            <person name="Tang A."/>
            <person name="Chen S."/>
            <person name="Zhang D."/>
            <person name="Yuan L."/>
            <person name="Liu G."/>
        </authorList>
    </citation>
    <scope>NUCLEOTIDE SEQUENCE [MRNA]</scope>
    <scope>SUBCELLULAR LOCATION</scope>
    <scope>TISSUE SPECIFICITY</scope>
</reference>